<dbReference type="EMBL" id="CP000852">
    <property type="protein sequence ID" value="ABW01931.1"/>
    <property type="molecule type" value="Genomic_DNA"/>
</dbReference>
<dbReference type="RefSeq" id="WP_012186150.1">
    <property type="nucleotide sequence ID" value="NC_009954.1"/>
</dbReference>
<dbReference type="SMR" id="A8MDS5"/>
<dbReference type="STRING" id="397948.Cmaq_1103"/>
<dbReference type="GeneID" id="5709692"/>
<dbReference type="KEGG" id="cma:Cmaq_1103"/>
<dbReference type="eggNOG" id="arCOG04239">
    <property type="taxonomic scope" value="Archaea"/>
</dbReference>
<dbReference type="HOGENOM" id="CLU_089738_1_1_2"/>
<dbReference type="OrthoDB" id="10429at2157"/>
<dbReference type="Proteomes" id="UP000001137">
    <property type="component" value="Chromosome"/>
</dbReference>
<dbReference type="GO" id="GO:0015935">
    <property type="term" value="C:small ribosomal subunit"/>
    <property type="evidence" value="ECO:0007669"/>
    <property type="project" value="InterPro"/>
</dbReference>
<dbReference type="GO" id="GO:0019843">
    <property type="term" value="F:rRNA binding"/>
    <property type="evidence" value="ECO:0007669"/>
    <property type="project" value="UniProtKB-UniRule"/>
</dbReference>
<dbReference type="GO" id="GO:0003735">
    <property type="term" value="F:structural constituent of ribosome"/>
    <property type="evidence" value="ECO:0007669"/>
    <property type="project" value="InterPro"/>
</dbReference>
<dbReference type="GO" id="GO:0042274">
    <property type="term" value="P:ribosomal small subunit biogenesis"/>
    <property type="evidence" value="ECO:0007669"/>
    <property type="project" value="TreeGrafter"/>
</dbReference>
<dbReference type="GO" id="GO:0006412">
    <property type="term" value="P:translation"/>
    <property type="evidence" value="ECO:0007669"/>
    <property type="project" value="UniProtKB-UniRule"/>
</dbReference>
<dbReference type="CDD" id="cd00165">
    <property type="entry name" value="S4"/>
    <property type="match status" value="1"/>
</dbReference>
<dbReference type="Gene3D" id="3.10.290.10">
    <property type="entry name" value="RNA-binding S4 domain"/>
    <property type="match status" value="1"/>
</dbReference>
<dbReference type="HAMAP" id="MF_01306_A">
    <property type="entry name" value="Ribosomal_uS4_A"/>
    <property type="match status" value="1"/>
</dbReference>
<dbReference type="InterPro" id="IPR022801">
    <property type="entry name" value="Ribosomal_uS4"/>
</dbReference>
<dbReference type="InterPro" id="IPR022802">
    <property type="entry name" value="Ribosomal_uS4_arc"/>
</dbReference>
<dbReference type="InterPro" id="IPR018079">
    <property type="entry name" value="Ribosomal_uS4_CS"/>
</dbReference>
<dbReference type="InterPro" id="IPR005710">
    <property type="entry name" value="Ribosomal_uS4_euk/arc"/>
</dbReference>
<dbReference type="InterPro" id="IPR001912">
    <property type="entry name" value="Ribosomal_uS4_N"/>
</dbReference>
<dbReference type="InterPro" id="IPR002942">
    <property type="entry name" value="S4_RNA-bd"/>
</dbReference>
<dbReference type="InterPro" id="IPR036986">
    <property type="entry name" value="S4_RNA-bd_sf"/>
</dbReference>
<dbReference type="NCBIfam" id="NF003139">
    <property type="entry name" value="PRK04051.1"/>
    <property type="match status" value="1"/>
</dbReference>
<dbReference type="NCBIfam" id="TIGR01018">
    <property type="entry name" value="uS4_arch"/>
    <property type="match status" value="1"/>
</dbReference>
<dbReference type="PANTHER" id="PTHR11831">
    <property type="entry name" value="30S 40S RIBOSOMAL PROTEIN"/>
    <property type="match status" value="1"/>
</dbReference>
<dbReference type="PANTHER" id="PTHR11831:SF5">
    <property type="entry name" value="40S RIBOSOMAL PROTEIN S9"/>
    <property type="match status" value="1"/>
</dbReference>
<dbReference type="Pfam" id="PF01479">
    <property type="entry name" value="S4"/>
    <property type="match status" value="1"/>
</dbReference>
<dbReference type="SMART" id="SM01390">
    <property type="entry name" value="Ribosomal_S4"/>
    <property type="match status" value="1"/>
</dbReference>
<dbReference type="SMART" id="SM00363">
    <property type="entry name" value="S4"/>
    <property type="match status" value="1"/>
</dbReference>
<dbReference type="SUPFAM" id="SSF55174">
    <property type="entry name" value="Alpha-L RNA-binding motif"/>
    <property type="match status" value="1"/>
</dbReference>
<dbReference type="PROSITE" id="PS00632">
    <property type="entry name" value="RIBOSOMAL_S4"/>
    <property type="match status" value="1"/>
</dbReference>
<dbReference type="PROSITE" id="PS50889">
    <property type="entry name" value="S4"/>
    <property type="match status" value="1"/>
</dbReference>
<gene>
    <name evidence="1" type="primary">rps4</name>
    <name type="ordered locus">Cmaq_1103</name>
</gene>
<name>RS4_CALMQ</name>
<reference key="1">
    <citation type="submission" date="2007-10" db="EMBL/GenBank/DDBJ databases">
        <title>Complete sequence of Caldivirga maquilingensis IC-167.</title>
        <authorList>
            <consortium name="US DOE Joint Genome Institute"/>
            <person name="Copeland A."/>
            <person name="Lucas S."/>
            <person name="Lapidus A."/>
            <person name="Barry K."/>
            <person name="Glavina del Rio T."/>
            <person name="Dalin E."/>
            <person name="Tice H."/>
            <person name="Pitluck S."/>
            <person name="Saunders E."/>
            <person name="Brettin T."/>
            <person name="Bruce D."/>
            <person name="Detter J.C."/>
            <person name="Han C."/>
            <person name="Schmutz J."/>
            <person name="Larimer F."/>
            <person name="Land M."/>
            <person name="Hauser L."/>
            <person name="Kyrpides N."/>
            <person name="Ivanova N."/>
            <person name="Biddle J.F."/>
            <person name="Zhang Z."/>
            <person name="Fitz-Gibbon S.T."/>
            <person name="Lowe T.M."/>
            <person name="Saltikov C."/>
            <person name="House C.H."/>
            <person name="Richardson P."/>
        </authorList>
    </citation>
    <scope>NUCLEOTIDE SEQUENCE [LARGE SCALE GENOMIC DNA]</scope>
    <source>
        <strain>ATCC 700844 / DSM 13496 / JCM 10307 / IC-167</strain>
    </source>
</reference>
<feature type="chain" id="PRO_1000085963" description="Small ribosomal subunit protein uS4">
    <location>
        <begin position="1"/>
        <end position="181"/>
    </location>
</feature>
<feature type="domain" description="S4 RNA-binding" evidence="1">
    <location>
        <begin position="106"/>
        <end position="168"/>
    </location>
</feature>
<protein>
    <recommendedName>
        <fullName evidence="1">Small ribosomal subunit protein uS4</fullName>
    </recommendedName>
    <alternativeName>
        <fullName evidence="2">30S ribosomal protein S4</fullName>
    </alternativeName>
</protein>
<evidence type="ECO:0000255" key="1">
    <source>
        <dbReference type="HAMAP-Rule" id="MF_01306"/>
    </source>
</evidence>
<evidence type="ECO:0000305" key="2"/>
<organism>
    <name type="scientific">Caldivirga maquilingensis (strain ATCC 700844 / DSM 13496 / JCM 10307 / IC-167)</name>
    <dbReference type="NCBI Taxonomy" id="397948"/>
    <lineage>
        <taxon>Archaea</taxon>
        <taxon>Thermoproteota</taxon>
        <taxon>Thermoprotei</taxon>
        <taxon>Thermoproteales</taxon>
        <taxon>Thermoproteaceae</taxon>
        <taxon>Caldivirga</taxon>
    </lineage>
</organism>
<keyword id="KW-1185">Reference proteome</keyword>
<keyword id="KW-0687">Ribonucleoprotein</keyword>
<keyword id="KW-0689">Ribosomal protein</keyword>
<keyword id="KW-0694">RNA-binding</keyword>
<keyword id="KW-0699">rRNA-binding</keyword>
<comment type="function">
    <text evidence="1">One of the primary rRNA binding proteins, it binds directly to 16S rRNA where it nucleates assembly of the body of the 30S subunit.</text>
</comment>
<comment type="function">
    <text evidence="1">With S5 and S12 plays an important role in translational accuracy.</text>
</comment>
<comment type="subunit">
    <text evidence="1">Part of the 30S ribosomal subunit. Contacts protein S5. The interaction surface between S4 and S5 is involved in control of translational fidelity.</text>
</comment>
<comment type="similarity">
    <text evidence="1">Belongs to the universal ribosomal protein uS4 family.</text>
</comment>
<sequence length="181" mass="20604">MGDPKRPKKKYVEGKPKRLWNSDLLMSELRLIGEYGLRNKKELWLARALLRSIKHRAREILSAPMEIRGEAEKRLKDRLFRMGLISDINIPLDSVLALDVTAVLERRLQTLVYRKGMARSIHEARQLIVHGHISINGVRVRSPGYLVPRNLEDGIGFAPTSRIVKAKVTQQVNQGGQAVNQ</sequence>
<accession>A8MDS5</accession>
<proteinExistence type="inferred from homology"/>